<comment type="function">
    <text evidence="1">Catalyzes the transfer of a dimethylallyl group onto the adenine at position 37 in tRNAs that read codons beginning with uridine, leading to the formation of N6-(dimethylallyl)adenosine (i(6)A).</text>
</comment>
<comment type="catalytic activity">
    <reaction evidence="1">
        <text>adenosine(37) in tRNA + dimethylallyl diphosphate = N(6)-dimethylallyladenosine(37) in tRNA + diphosphate</text>
        <dbReference type="Rhea" id="RHEA:26482"/>
        <dbReference type="Rhea" id="RHEA-COMP:10162"/>
        <dbReference type="Rhea" id="RHEA-COMP:10375"/>
        <dbReference type="ChEBI" id="CHEBI:33019"/>
        <dbReference type="ChEBI" id="CHEBI:57623"/>
        <dbReference type="ChEBI" id="CHEBI:74411"/>
        <dbReference type="ChEBI" id="CHEBI:74415"/>
        <dbReference type="EC" id="2.5.1.75"/>
    </reaction>
</comment>
<comment type="cofactor">
    <cofactor evidence="1">
        <name>Mg(2+)</name>
        <dbReference type="ChEBI" id="CHEBI:18420"/>
    </cofactor>
</comment>
<comment type="subunit">
    <text evidence="1">Monomer.</text>
</comment>
<comment type="similarity">
    <text evidence="1">Belongs to the IPP transferase family.</text>
</comment>
<proteinExistence type="inferred from homology"/>
<dbReference type="EC" id="2.5.1.75" evidence="1"/>
<dbReference type="EMBL" id="CP001124">
    <property type="protein sequence ID" value="ACH38663.1"/>
    <property type="molecule type" value="Genomic_DNA"/>
</dbReference>
<dbReference type="RefSeq" id="WP_012530079.1">
    <property type="nucleotide sequence ID" value="NC_011146.1"/>
</dbReference>
<dbReference type="SMR" id="B5E9C1"/>
<dbReference type="STRING" id="404380.Gbem_1645"/>
<dbReference type="KEGG" id="gbm:Gbem_1645"/>
<dbReference type="eggNOG" id="COG0324">
    <property type="taxonomic scope" value="Bacteria"/>
</dbReference>
<dbReference type="HOGENOM" id="CLU_032616_0_1_7"/>
<dbReference type="OrthoDB" id="9776390at2"/>
<dbReference type="Proteomes" id="UP000008825">
    <property type="component" value="Chromosome"/>
</dbReference>
<dbReference type="GO" id="GO:0005524">
    <property type="term" value="F:ATP binding"/>
    <property type="evidence" value="ECO:0007669"/>
    <property type="project" value="UniProtKB-UniRule"/>
</dbReference>
<dbReference type="GO" id="GO:0052381">
    <property type="term" value="F:tRNA dimethylallyltransferase activity"/>
    <property type="evidence" value="ECO:0007669"/>
    <property type="project" value="UniProtKB-UniRule"/>
</dbReference>
<dbReference type="GO" id="GO:0006400">
    <property type="term" value="P:tRNA modification"/>
    <property type="evidence" value="ECO:0007669"/>
    <property type="project" value="TreeGrafter"/>
</dbReference>
<dbReference type="Gene3D" id="3.40.50.300">
    <property type="entry name" value="P-loop containing nucleotide triphosphate hydrolases"/>
    <property type="match status" value="1"/>
</dbReference>
<dbReference type="HAMAP" id="MF_00185">
    <property type="entry name" value="IPP_trans"/>
    <property type="match status" value="1"/>
</dbReference>
<dbReference type="InterPro" id="IPR039657">
    <property type="entry name" value="Dimethylallyltransferase"/>
</dbReference>
<dbReference type="InterPro" id="IPR018022">
    <property type="entry name" value="IPT"/>
</dbReference>
<dbReference type="InterPro" id="IPR027417">
    <property type="entry name" value="P-loop_NTPase"/>
</dbReference>
<dbReference type="NCBIfam" id="TIGR00174">
    <property type="entry name" value="miaA"/>
    <property type="match status" value="1"/>
</dbReference>
<dbReference type="PANTHER" id="PTHR11088">
    <property type="entry name" value="TRNA DIMETHYLALLYLTRANSFERASE"/>
    <property type="match status" value="1"/>
</dbReference>
<dbReference type="PANTHER" id="PTHR11088:SF60">
    <property type="entry name" value="TRNA DIMETHYLALLYLTRANSFERASE"/>
    <property type="match status" value="1"/>
</dbReference>
<dbReference type="Pfam" id="PF01715">
    <property type="entry name" value="IPPT"/>
    <property type="match status" value="1"/>
</dbReference>
<dbReference type="SUPFAM" id="SSF52540">
    <property type="entry name" value="P-loop containing nucleoside triphosphate hydrolases"/>
    <property type="match status" value="2"/>
</dbReference>
<organism>
    <name type="scientific">Citrifermentans bemidjiense (strain ATCC BAA-1014 / DSM 16622 / JCM 12645 / Bem)</name>
    <name type="common">Geobacter bemidjiensis</name>
    <dbReference type="NCBI Taxonomy" id="404380"/>
    <lineage>
        <taxon>Bacteria</taxon>
        <taxon>Pseudomonadati</taxon>
        <taxon>Thermodesulfobacteriota</taxon>
        <taxon>Desulfuromonadia</taxon>
        <taxon>Geobacterales</taxon>
        <taxon>Geobacteraceae</taxon>
        <taxon>Citrifermentans</taxon>
    </lineage>
</organism>
<keyword id="KW-0067">ATP-binding</keyword>
<keyword id="KW-0460">Magnesium</keyword>
<keyword id="KW-0547">Nucleotide-binding</keyword>
<keyword id="KW-1185">Reference proteome</keyword>
<keyword id="KW-0808">Transferase</keyword>
<keyword id="KW-0819">tRNA processing</keyword>
<reference key="1">
    <citation type="submission" date="2008-07" db="EMBL/GenBank/DDBJ databases">
        <title>Complete sequence of Geobacter bemidjiensis BEM.</title>
        <authorList>
            <consortium name="US DOE Joint Genome Institute"/>
            <person name="Lucas S."/>
            <person name="Copeland A."/>
            <person name="Lapidus A."/>
            <person name="Glavina del Rio T."/>
            <person name="Dalin E."/>
            <person name="Tice H."/>
            <person name="Bruce D."/>
            <person name="Goodwin L."/>
            <person name="Pitluck S."/>
            <person name="Kiss H."/>
            <person name="Brettin T."/>
            <person name="Detter J.C."/>
            <person name="Han C."/>
            <person name="Kuske C.R."/>
            <person name="Schmutz J."/>
            <person name="Larimer F."/>
            <person name="Land M."/>
            <person name="Hauser L."/>
            <person name="Kyrpides N."/>
            <person name="Lykidis A."/>
            <person name="Lovley D."/>
            <person name="Richardson P."/>
        </authorList>
    </citation>
    <scope>NUCLEOTIDE SEQUENCE [LARGE SCALE GENOMIC DNA]</scope>
    <source>
        <strain>ATCC BAA-1014 / DSM 16622 / JCM 12645 / Bem</strain>
    </source>
</reference>
<sequence>MTDETETPERIPNLLVILGATASGKTRLGVQLAGRLNGEIISADSRQVYCGMDIGTGKDLHEYQGIPYHLIDVAPAGHEFNLFQFQRLFLAAFTDICSRGAFPVLVGGSGMYLDCVLRGYRLTEVPQDPALREELAPLSMDELASRLVRSNPRLHNSTDLTERARLIRAIEIAEYRGEAGDDWPELTPLTIGIRWERAQLRERITKRLKERMEQGMVEEVERLHAMGTSWEQLEFYGLEYRYLARYLKGELSRNDMFQKLNSAIHDFAKKQENWFRKMQTNGIAINWVEGNSDPLAQALELLAKNR</sequence>
<evidence type="ECO:0000255" key="1">
    <source>
        <dbReference type="HAMAP-Rule" id="MF_00185"/>
    </source>
</evidence>
<name>MIAA2_CITBB</name>
<gene>
    <name evidence="1" type="primary">miaA2</name>
    <name type="ordered locus">Gbem_1645</name>
</gene>
<accession>B5E9C1</accession>
<protein>
    <recommendedName>
        <fullName evidence="1">tRNA dimethylallyltransferase 2</fullName>
        <ecNumber evidence="1">2.5.1.75</ecNumber>
    </recommendedName>
    <alternativeName>
        <fullName evidence="1">Dimethylallyl diphosphate:tRNA dimethylallyltransferase 2</fullName>
        <shortName evidence="1">DMAPP:tRNA dimethylallyltransferase 2</shortName>
        <shortName evidence="1">DMATase 2</shortName>
    </alternativeName>
    <alternativeName>
        <fullName evidence="1">Isopentenyl-diphosphate:tRNA isopentenyltransferase 2</fullName>
        <shortName evidence="1">IPP transferase 2</shortName>
        <shortName evidence="1">IPPT 2</shortName>
        <shortName evidence="1">IPTase 2</shortName>
    </alternativeName>
</protein>
<feature type="chain" id="PRO_0000377168" description="tRNA dimethylallyltransferase 2">
    <location>
        <begin position="1"/>
        <end position="306"/>
    </location>
</feature>
<feature type="region of interest" description="Interaction with substrate tRNA" evidence="1">
    <location>
        <begin position="44"/>
        <end position="47"/>
    </location>
</feature>
<feature type="binding site" evidence="1">
    <location>
        <begin position="19"/>
        <end position="26"/>
    </location>
    <ligand>
        <name>ATP</name>
        <dbReference type="ChEBI" id="CHEBI:30616"/>
    </ligand>
</feature>
<feature type="binding site" evidence="1">
    <location>
        <begin position="21"/>
        <end position="26"/>
    </location>
    <ligand>
        <name>substrate</name>
    </ligand>
</feature>
<feature type="site" description="Interaction with substrate tRNA" evidence="1">
    <location>
        <position position="109"/>
    </location>
</feature>